<name>Y108_ENCCU</name>
<feature type="chain" id="PRO_0000223144" description="UPF0329 protein ECU01_0080/ECU01_1530/ECU02_1560/ECU04_0090/ECU08_0010/ECU08_2090">
    <location>
        <begin position="1"/>
        <end position="331"/>
    </location>
</feature>
<feature type="region of interest" description="Disordered" evidence="1">
    <location>
        <begin position="305"/>
        <end position="331"/>
    </location>
</feature>
<feature type="compositionally biased region" description="Basic and acidic residues" evidence="1">
    <location>
        <begin position="305"/>
        <end position="320"/>
    </location>
</feature>
<feature type="compositionally biased region" description="Basic residues" evidence="1">
    <location>
        <begin position="321"/>
        <end position="331"/>
    </location>
</feature>
<keyword id="KW-1185">Reference proteome</keyword>
<evidence type="ECO:0000256" key="1">
    <source>
        <dbReference type="SAM" id="MobiDB-lite"/>
    </source>
</evidence>
<evidence type="ECO:0000305" key="2"/>
<protein>
    <recommendedName>
        <fullName>UPF0329 protein ECU01_0080/ECU01_1530/ECU02_1560/ECU04_0090/ECU08_0010/ECU08_2090</fullName>
    </recommendedName>
</protein>
<reference key="1">
    <citation type="journal article" date="2001" name="Genome Res.">
        <title>Sequence and analysis of chromosome I of the amitochondriate intracellular parasite Encephalitozoon cuniculi (Microspora).</title>
        <authorList>
            <person name="Peyret P."/>
            <person name="Katinka M.D."/>
            <person name="Duprat S."/>
            <person name="Duffieux F."/>
            <person name="Barbe V."/>
            <person name="Barbazanges M."/>
            <person name="Weissenbach J."/>
            <person name="Saurin W."/>
            <person name="Vivares C.P."/>
        </authorList>
    </citation>
    <scope>NUCLEOTIDE SEQUENCE [LARGE SCALE GENOMIC DNA]</scope>
    <source>
        <strain>GB-M1</strain>
    </source>
</reference>
<reference key="2">
    <citation type="journal article" date="2001" name="Nature">
        <title>Genome sequence and gene compaction of the eukaryote parasite Encephalitozoon cuniculi.</title>
        <authorList>
            <person name="Katinka M.D."/>
            <person name="Duprat S."/>
            <person name="Cornillot E."/>
            <person name="Metenier G."/>
            <person name="Thomarat F."/>
            <person name="Prensier G."/>
            <person name="Barbe V."/>
            <person name="Peyretaillade E."/>
            <person name="Brottier P."/>
            <person name="Wincker P."/>
            <person name="Delbac F."/>
            <person name="El Alaoui H."/>
            <person name="Peyret P."/>
            <person name="Saurin W."/>
            <person name="Gouy M."/>
            <person name="Weissenbach J."/>
            <person name="Vivares C.P."/>
        </authorList>
    </citation>
    <scope>NUCLEOTIDE SEQUENCE [LARGE SCALE GENOMIC DNA]</scope>
    <source>
        <strain>GB-M1</strain>
    </source>
</reference>
<comment type="similarity">
    <text evidence="2">Belongs to the UPF0329 family.</text>
</comment>
<gene>
    <name type="ordered locus">ECU01_0080</name>
</gene>
<gene>
    <name type="ordered locus">ECU01_1530</name>
</gene>
<gene>
    <name type="ordered locus">ECU02_1560</name>
</gene>
<gene>
    <name type="ordered locus">ECU04_0090</name>
</gene>
<gene>
    <name type="ordered locus">ECU08_0010</name>
</gene>
<gene>
    <name type="ordered locus">ECU08_2090</name>
</gene>
<sequence length="331" mass="37889">MRRIYAAWTLVAAAGVMDCSPRLEKAAAFTLGPDSQVIVFPFMFQGYNIAVLPTTKYGDLKGNARRRVASFLEHNISHAVWYFVVGGIAYKDDRSERLFSEMMDGYLKKISAGASKVYKGGRKMFSESLETVHEMIFECNKAGDGHVVKYGKSIINRLSDMIENALGEVSAEEKRKYRRFWSRVKERAGFLYSTERLRRVVEAEKIVCNACKEICLELEEEELMGLLAEGSVRKALKAKVDEDEISRGLYLECTVVNTSLLLDAHREHGGDVTRELVKQMLLGKKGEEIDRRYINKVANVVKERQRSEMEKRDREQDPERRRLRARRVGSL</sequence>
<proteinExistence type="inferred from homology"/>
<organism>
    <name type="scientific">Encephalitozoon cuniculi (strain GB-M1)</name>
    <name type="common">Microsporidian parasite</name>
    <dbReference type="NCBI Taxonomy" id="284813"/>
    <lineage>
        <taxon>Eukaryota</taxon>
        <taxon>Fungi</taxon>
        <taxon>Fungi incertae sedis</taxon>
        <taxon>Microsporidia</taxon>
        <taxon>Unikaryonidae</taxon>
        <taxon>Encephalitozoon</taxon>
    </lineage>
</organism>
<dbReference type="EMBL" id="AL391737">
    <property type="protein sequence ID" value="CAD24880.1"/>
    <property type="molecule type" value="Genomic_DNA"/>
</dbReference>
<dbReference type="EMBL" id="AL391737">
    <property type="protein sequence ID" value="CAD25024.1"/>
    <property type="molecule type" value="Genomic_DNA"/>
</dbReference>
<dbReference type="EMBL" id="AL590442">
    <property type="protein sequence ID" value="CAD25185.1"/>
    <property type="molecule type" value="Genomic_DNA"/>
</dbReference>
<dbReference type="EMBL" id="AL590444">
    <property type="protein sequence ID" value="CAD25196.1"/>
    <property type="molecule type" value="Genomic_DNA"/>
</dbReference>
<dbReference type="EMBL" id="AL590448">
    <property type="protein sequence ID" value="CAD26306.1"/>
    <property type="molecule type" value="Genomic_DNA"/>
</dbReference>
<dbReference type="EMBL" id="AL590448">
    <property type="protein sequence ID" value="CAD26511.1"/>
    <property type="molecule type" value="Genomic_DNA"/>
</dbReference>
<dbReference type="RefSeq" id="NP_001402096.1">
    <property type="nucleotide sequence ID" value="NM_001415615.1"/>
</dbReference>
<dbReference type="RefSeq" id="NP_584681.1">
    <property type="nucleotide sequence ID" value="NM_001040870.1"/>
</dbReference>
<dbReference type="RefSeq" id="NP_584692.1">
    <property type="nucleotide sequence ID" value="NM_001041042.1"/>
</dbReference>
<dbReference type="RefSeq" id="NP_597130.1">
    <property type="nucleotide sequence ID" value="NM_001041739.1"/>
</dbReference>
<dbReference type="RefSeq" id="NP_597335.1">
    <property type="nucleotide sequence ID" value="NM_001041944.1"/>
</dbReference>
<dbReference type="RefSeq" id="XP_965845.1">
    <property type="nucleotide sequence ID" value="XM_960752.1"/>
</dbReference>
<dbReference type="RefSeq" id="XP_965989.1">
    <property type="nucleotide sequence ID" value="XM_960896.1"/>
</dbReference>
<dbReference type="STRING" id="284813.Q8STE0"/>
<dbReference type="GeneID" id="858671"/>
<dbReference type="GeneID" id="858840"/>
<dbReference type="GeneID" id="859552"/>
<dbReference type="GeneID" id="859757"/>
<dbReference type="GeneID" id="860181"/>
<dbReference type="KEGG" id="ecu:ECU02_1560"/>
<dbReference type="KEGG" id="ecu:ECU04_0090"/>
<dbReference type="KEGG" id="ecu:ECU08_0010"/>
<dbReference type="KEGG" id="ecu:ECU08_2090"/>
<dbReference type="VEuPathDB" id="MicrosporidiaDB:ECU01_0080"/>
<dbReference type="VEuPathDB" id="MicrosporidiaDB:ECU01_1530"/>
<dbReference type="VEuPathDB" id="MicrosporidiaDB:ECU02_1560"/>
<dbReference type="VEuPathDB" id="MicrosporidiaDB:ECU04_0090"/>
<dbReference type="VEuPathDB" id="MicrosporidiaDB:ECU08_0010"/>
<dbReference type="VEuPathDB" id="MicrosporidiaDB:ECU08_2090"/>
<dbReference type="HOGENOM" id="CLU_059952_0_0_1"/>
<dbReference type="InParanoid" id="Q8STE0"/>
<dbReference type="OrthoDB" id="2200597at2759"/>
<dbReference type="Proteomes" id="UP000000819">
    <property type="component" value="Chromosome I"/>
</dbReference>
<dbReference type="Proteomes" id="UP000000819">
    <property type="component" value="Chromosome II"/>
</dbReference>
<dbReference type="Proteomes" id="UP000000819">
    <property type="component" value="Chromosome IV"/>
</dbReference>
<dbReference type="Proteomes" id="UP000000819">
    <property type="component" value="Chromosome VIII"/>
</dbReference>
<dbReference type="InterPro" id="IPR022115">
    <property type="entry name" value="DUF3654"/>
</dbReference>
<dbReference type="Pfam" id="PF12376">
    <property type="entry name" value="DUF3654"/>
    <property type="match status" value="1"/>
</dbReference>
<accession>Q8STE0</accession>